<name>PPAC_STRMU</name>
<keyword id="KW-0002">3D-structure</keyword>
<keyword id="KW-0963">Cytoplasm</keyword>
<keyword id="KW-0378">Hydrolase</keyword>
<keyword id="KW-0464">Manganese</keyword>
<keyword id="KW-0479">Metal-binding</keyword>
<keyword id="KW-1185">Reference proteome</keyword>
<proteinExistence type="evidence at protein level"/>
<gene>
    <name type="primary">ppaC</name>
    <name type="synonym">dlt5</name>
    <name type="synonym">ppx1</name>
    <name type="ordered locus">SMU_1687</name>
</gene>
<evidence type="ECO:0000250" key="1"/>
<evidence type="ECO:0000305" key="2"/>
<evidence type="ECO:0007829" key="3">
    <source>
        <dbReference type="PDB" id="1I74"/>
    </source>
</evidence>
<dbReference type="EC" id="3.6.1.1"/>
<dbReference type="EMBL" id="AF051356">
    <property type="protein sequence ID" value="AAC05778.1"/>
    <property type="molecule type" value="Genomic_DNA"/>
</dbReference>
<dbReference type="EMBL" id="AF050517">
    <property type="protein sequence ID" value="AAC29042.1"/>
    <property type="molecule type" value="Genomic_DNA"/>
</dbReference>
<dbReference type="EMBL" id="AE014133">
    <property type="protein sequence ID" value="AAN59324.1"/>
    <property type="molecule type" value="Genomic_DNA"/>
</dbReference>
<dbReference type="RefSeq" id="NP_722018.1">
    <property type="nucleotide sequence ID" value="NC_004350.2"/>
</dbReference>
<dbReference type="RefSeq" id="WP_002262586.1">
    <property type="nucleotide sequence ID" value="NC_004350.2"/>
</dbReference>
<dbReference type="PDB" id="1I74">
    <property type="method" value="X-ray"/>
    <property type="resolution" value="2.20 A"/>
    <property type="chains" value="A/B=2-310"/>
</dbReference>
<dbReference type="PDBsum" id="1I74"/>
<dbReference type="SMR" id="O68579"/>
<dbReference type="STRING" id="210007.SMU_1687"/>
<dbReference type="KEGG" id="smu:SMU_1687"/>
<dbReference type="PATRIC" id="fig|210007.7.peg.1507"/>
<dbReference type="eggNOG" id="COG1227">
    <property type="taxonomic scope" value="Bacteria"/>
</dbReference>
<dbReference type="HOGENOM" id="CLU_025243_0_1_9"/>
<dbReference type="OrthoDB" id="9766150at2"/>
<dbReference type="PhylomeDB" id="O68579"/>
<dbReference type="EvolutionaryTrace" id="O68579"/>
<dbReference type="Proteomes" id="UP000002512">
    <property type="component" value="Chromosome"/>
</dbReference>
<dbReference type="GO" id="GO:0005737">
    <property type="term" value="C:cytoplasm"/>
    <property type="evidence" value="ECO:0007669"/>
    <property type="project" value="UniProtKB-SubCell"/>
</dbReference>
<dbReference type="GO" id="GO:0004427">
    <property type="term" value="F:inorganic diphosphate phosphatase activity"/>
    <property type="evidence" value="ECO:0007669"/>
    <property type="project" value="UniProtKB-UniRule"/>
</dbReference>
<dbReference type="GO" id="GO:0030145">
    <property type="term" value="F:manganese ion binding"/>
    <property type="evidence" value="ECO:0007669"/>
    <property type="project" value="UniProtKB-UniRule"/>
</dbReference>
<dbReference type="FunFam" id="3.10.310.20:FF:000001">
    <property type="entry name" value="Probable manganese-dependent inorganic pyrophosphatase"/>
    <property type="match status" value="1"/>
</dbReference>
<dbReference type="FunFam" id="3.90.1640.10:FF:000001">
    <property type="entry name" value="Probable manganese-dependent inorganic pyrophosphatase"/>
    <property type="match status" value="1"/>
</dbReference>
<dbReference type="Gene3D" id="3.10.310.20">
    <property type="entry name" value="DHHA2 domain"/>
    <property type="match status" value="1"/>
</dbReference>
<dbReference type="Gene3D" id="3.90.1640.10">
    <property type="entry name" value="inorganic pyrophosphatase (n-terminal core)"/>
    <property type="match status" value="1"/>
</dbReference>
<dbReference type="HAMAP" id="MF_00207">
    <property type="entry name" value="PPase_C"/>
    <property type="match status" value="1"/>
</dbReference>
<dbReference type="InterPro" id="IPR001667">
    <property type="entry name" value="DDH_dom"/>
</dbReference>
<dbReference type="InterPro" id="IPR038763">
    <property type="entry name" value="DHH_sf"/>
</dbReference>
<dbReference type="InterPro" id="IPR004097">
    <property type="entry name" value="DHHA2"/>
</dbReference>
<dbReference type="InterPro" id="IPR038222">
    <property type="entry name" value="DHHA2_dom_sf"/>
</dbReference>
<dbReference type="InterPro" id="IPR022934">
    <property type="entry name" value="Mn-dep_inorganic_PyrPase"/>
</dbReference>
<dbReference type="InterPro" id="IPR051319">
    <property type="entry name" value="Oligoribo/pAp-PDE_c-di-AMP_PDE"/>
</dbReference>
<dbReference type="NCBIfam" id="NF003877">
    <property type="entry name" value="PRK05427.1"/>
    <property type="match status" value="1"/>
</dbReference>
<dbReference type="PANTHER" id="PTHR47618">
    <property type="entry name" value="BIFUNCTIONAL OLIGORIBONUCLEASE AND PAP PHOSPHATASE NRNA"/>
    <property type="match status" value="1"/>
</dbReference>
<dbReference type="PANTHER" id="PTHR47618:SF1">
    <property type="entry name" value="BIFUNCTIONAL OLIGORIBONUCLEASE AND PAP PHOSPHATASE NRNA"/>
    <property type="match status" value="1"/>
</dbReference>
<dbReference type="Pfam" id="PF01368">
    <property type="entry name" value="DHH"/>
    <property type="match status" value="1"/>
</dbReference>
<dbReference type="Pfam" id="PF02833">
    <property type="entry name" value="DHHA2"/>
    <property type="match status" value="1"/>
</dbReference>
<dbReference type="SMART" id="SM01131">
    <property type="entry name" value="DHHA2"/>
    <property type="match status" value="1"/>
</dbReference>
<dbReference type="SUPFAM" id="SSF64182">
    <property type="entry name" value="DHH phosphoesterases"/>
    <property type="match status" value="1"/>
</dbReference>
<comment type="catalytic activity">
    <reaction>
        <text>diphosphate + H2O = 2 phosphate + H(+)</text>
        <dbReference type="Rhea" id="RHEA:24576"/>
        <dbReference type="ChEBI" id="CHEBI:15377"/>
        <dbReference type="ChEBI" id="CHEBI:15378"/>
        <dbReference type="ChEBI" id="CHEBI:33019"/>
        <dbReference type="ChEBI" id="CHEBI:43474"/>
        <dbReference type="EC" id="3.6.1.1"/>
    </reaction>
</comment>
<comment type="cofactor">
    <cofactor evidence="1">
        <name>Mn(2+)</name>
        <dbReference type="ChEBI" id="CHEBI:29035"/>
    </cofactor>
    <text evidence="1">Binds 2 manganese ions per subunit.</text>
</comment>
<comment type="subunit">
    <text>Homodimer.</text>
</comment>
<comment type="subcellular location">
    <subcellularLocation>
        <location evidence="1">Cytoplasm</location>
    </subcellularLocation>
</comment>
<comment type="similarity">
    <text evidence="2">Belongs to the PPase class C family.</text>
</comment>
<sequence length="310" mass="33403">MSKILVFGHQNPDSDAIGSSMAYAYLKRQLGVDAQAVALGNPNEETAFVLDYFGIQAPPVVKSAQAEGAKQVILTDHNEFQQSIADIREVEVVEVVDHHRVANFETANPLYMRLEPVGSASSIVYRLYKENGVAIPKEIAGVMLSGLISDTLLLKSPTTHASDPAVAEDLAKIAGVDLQEYGLAMLKAGTNLASKTAAQLVDIDAKTFELNGSQVRVAQVNTVDINEVLERQNEIEEAIKASQAANGYSDFVLMITDILNSNSEILALGNNTDKVEAAFNFTLKNNHAFLAGAVSRKKQVVPQLTESFNG</sequence>
<reference key="1">
    <citation type="journal article" date="2000" name="J. Bacteriol.">
        <title>Defects in D-alanyl-lipoteichoic acid synthesis in Streptococcus mutans results in acid sensitivity.</title>
        <authorList>
            <person name="Boyd D.A."/>
            <person name="Cvitkovitch D.G."/>
            <person name="Bleiweis A.S."/>
            <person name="Kiriukhin M.Y."/>
            <person name="Debabov D.V."/>
            <person name="Neuhaus F.C."/>
            <person name="Hamilton I.R."/>
        </authorList>
    </citation>
    <scope>NUCLEOTIDE SEQUENCE [GENOMIC DNA]</scope>
    <source>
        <strain>LT11</strain>
    </source>
</reference>
<reference key="2">
    <citation type="submission" date="1998-08" db="EMBL/GenBank/DDBJ databases">
        <authorList>
            <person name="Spatafora G."/>
        </authorList>
    </citation>
    <scope>NUCLEOTIDE SEQUENCE [GENOMIC DNA]</scope>
</reference>
<reference key="3">
    <citation type="journal article" date="2002" name="Proc. Natl. Acad. Sci. U.S.A.">
        <title>Genome sequence of Streptococcus mutans UA159, a cariogenic dental pathogen.</title>
        <authorList>
            <person name="Ajdic D.J."/>
            <person name="McShan W.M."/>
            <person name="McLaughlin R.E."/>
            <person name="Savic G."/>
            <person name="Chang J."/>
            <person name="Carson M.B."/>
            <person name="Primeaux C."/>
            <person name="Tian R."/>
            <person name="Kenton S."/>
            <person name="Jia H.G."/>
            <person name="Lin S.P."/>
            <person name="Qian Y."/>
            <person name="Li S."/>
            <person name="Zhu H."/>
            <person name="Najar F.Z."/>
            <person name="Lai H."/>
            <person name="White J."/>
            <person name="Roe B.A."/>
            <person name="Ferretti J.J."/>
        </authorList>
    </citation>
    <scope>NUCLEOTIDE SEQUENCE [LARGE SCALE GENOMIC DNA]</scope>
    <source>
        <strain>ATCC 700610 / UA159</strain>
    </source>
</reference>
<reference key="4">
    <citation type="journal article" date="2001" name="Structure">
        <title>Crystal structure of Streptococcus mutans pyrophosphatase: a new fold for an old mechanism.</title>
        <authorList>
            <person name="Merckel M.C."/>
            <person name="Fabrichniy I.P."/>
            <person name="Salminen A."/>
            <person name="Kalkkinen N."/>
            <person name="Baykov A.A."/>
            <person name="Lahti R."/>
            <person name="Goldman A."/>
        </authorList>
    </citation>
    <scope>X-RAY CRYSTALLOGRAPHY (2.2 ANGSTROMS)</scope>
</reference>
<feature type="chain" id="PRO_0000158590" description="Probable manganese-dependent inorganic pyrophosphatase">
    <location>
        <begin position="1"/>
        <end position="310"/>
    </location>
</feature>
<feature type="binding site">
    <location>
        <position position="9"/>
    </location>
    <ligand>
        <name>Mn(2+)</name>
        <dbReference type="ChEBI" id="CHEBI:29035"/>
        <label>1</label>
    </ligand>
</feature>
<feature type="binding site">
    <location>
        <position position="13"/>
    </location>
    <ligand>
        <name>Mn(2+)</name>
        <dbReference type="ChEBI" id="CHEBI:29035"/>
        <label>1</label>
    </ligand>
</feature>
<feature type="binding site">
    <location>
        <position position="15"/>
    </location>
    <ligand>
        <name>Mn(2+)</name>
        <dbReference type="ChEBI" id="CHEBI:29035"/>
        <label>2</label>
    </ligand>
</feature>
<feature type="binding site">
    <location>
        <position position="76"/>
    </location>
    <ligand>
        <name>Mn(2+)</name>
        <dbReference type="ChEBI" id="CHEBI:29035"/>
        <label>1</label>
    </ligand>
</feature>
<feature type="binding site">
    <location>
        <position position="76"/>
    </location>
    <ligand>
        <name>Mn(2+)</name>
        <dbReference type="ChEBI" id="CHEBI:29035"/>
        <label>2</label>
    </ligand>
</feature>
<feature type="binding site">
    <location>
        <position position="98"/>
    </location>
    <ligand>
        <name>Mn(2+)</name>
        <dbReference type="ChEBI" id="CHEBI:29035"/>
        <label>2</label>
    </ligand>
</feature>
<feature type="binding site">
    <location>
        <position position="150"/>
    </location>
    <ligand>
        <name>Mn(2+)</name>
        <dbReference type="ChEBI" id="CHEBI:29035"/>
        <label>2</label>
    </ligand>
</feature>
<feature type="strand" evidence="3">
    <location>
        <begin position="4"/>
        <end position="7"/>
    </location>
</feature>
<feature type="helix" evidence="3">
    <location>
        <begin position="14"/>
        <end position="29"/>
    </location>
</feature>
<feature type="strand" evidence="3">
    <location>
        <begin position="34"/>
        <end position="36"/>
    </location>
</feature>
<feature type="strand" evidence="3">
    <location>
        <begin position="38"/>
        <end position="40"/>
    </location>
</feature>
<feature type="helix" evidence="3">
    <location>
        <begin position="44"/>
        <end position="52"/>
    </location>
</feature>
<feature type="turn" evidence="3">
    <location>
        <begin position="64"/>
        <end position="68"/>
    </location>
</feature>
<feature type="strand" evidence="3">
    <location>
        <begin position="70"/>
        <end position="76"/>
    </location>
</feature>
<feature type="helix" evidence="3">
    <location>
        <begin position="80"/>
        <end position="82"/>
    </location>
</feature>
<feature type="helix" evidence="3">
    <location>
        <begin position="87"/>
        <end position="89"/>
    </location>
</feature>
<feature type="strand" evidence="3">
    <location>
        <begin position="90"/>
        <end position="97"/>
    </location>
</feature>
<feature type="strand" evidence="3">
    <location>
        <begin position="111"/>
        <end position="114"/>
    </location>
</feature>
<feature type="strand" evidence="3">
    <location>
        <begin position="116"/>
        <end position="118"/>
    </location>
</feature>
<feature type="helix" evidence="3">
    <location>
        <begin position="120"/>
        <end position="131"/>
    </location>
</feature>
<feature type="helix" evidence="3">
    <location>
        <begin position="137"/>
        <end position="151"/>
    </location>
</feature>
<feature type="turn" evidence="3">
    <location>
        <begin position="152"/>
        <end position="155"/>
    </location>
</feature>
<feature type="helix" evidence="3">
    <location>
        <begin position="163"/>
        <end position="174"/>
    </location>
</feature>
<feature type="helix" evidence="3">
    <location>
        <begin position="178"/>
        <end position="188"/>
    </location>
</feature>
<feature type="helix" evidence="3">
    <location>
        <begin position="197"/>
        <end position="200"/>
    </location>
</feature>
<feature type="strand" evidence="3">
    <location>
        <begin position="203"/>
        <end position="210"/>
    </location>
</feature>
<feature type="strand" evidence="3">
    <location>
        <begin position="213"/>
        <end position="223"/>
    </location>
</feature>
<feature type="helix" evidence="3">
    <location>
        <begin position="225"/>
        <end position="228"/>
    </location>
</feature>
<feature type="helix" evidence="3">
    <location>
        <begin position="229"/>
        <end position="231"/>
    </location>
</feature>
<feature type="helix" evidence="3">
    <location>
        <begin position="232"/>
        <end position="246"/>
    </location>
</feature>
<feature type="strand" evidence="3">
    <location>
        <begin position="249"/>
        <end position="257"/>
    </location>
</feature>
<feature type="turn" evidence="3">
    <location>
        <begin position="258"/>
        <end position="261"/>
    </location>
</feature>
<feature type="strand" evidence="3">
    <location>
        <begin position="262"/>
        <end position="269"/>
    </location>
</feature>
<feature type="helix" evidence="3">
    <location>
        <begin position="272"/>
        <end position="279"/>
    </location>
</feature>
<feature type="strand" evidence="3">
    <location>
        <begin position="287"/>
        <end position="290"/>
    </location>
</feature>
<feature type="helix" evidence="3">
    <location>
        <begin position="296"/>
        <end position="299"/>
    </location>
</feature>
<feature type="helix" evidence="3">
    <location>
        <begin position="301"/>
        <end position="308"/>
    </location>
</feature>
<protein>
    <recommendedName>
        <fullName>Probable manganese-dependent inorganic pyrophosphatase</fullName>
        <ecNumber>3.6.1.1</ecNumber>
    </recommendedName>
    <alternativeName>
        <fullName>Pyrophosphate phospho-hydrolase</fullName>
        <shortName>PPase</shortName>
    </alternativeName>
</protein>
<accession>O68579</accession>
<organism>
    <name type="scientific">Streptococcus mutans serotype c (strain ATCC 700610 / UA159)</name>
    <dbReference type="NCBI Taxonomy" id="210007"/>
    <lineage>
        <taxon>Bacteria</taxon>
        <taxon>Bacillati</taxon>
        <taxon>Bacillota</taxon>
        <taxon>Bacilli</taxon>
        <taxon>Lactobacillales</taxon>
        <taxon>Streptococcaceae</taxon>
        <taxon>Streptococcus</taxon>
    </lineage>
</organism>